<sequence length="163" mass="18415">MAKESSFDIVSKVELPEVTNAINIALKEIQNRYDFKGSKSDIKLEKEVLVLTSDDAFKLDQVKDVLISKLVKRNVPIKNLDYGKVETASGNTVRQRATLQQGIDKDNAKKINNIIKEMKLKVKTQVQDDQVRVTAKSRDDLQAVIAAVRSVDLPIDVQFINYR</sequence>
<keyword id="KW-0547">Nucleotide-binding</keyword>
<name>Y1061_BACMK</name>
<comment type="function">
    <text evidence="1">Nucleotide-binding protein.</text>
</comment>
<comment type="similarity">
    <text evidence="1">Belongs to the YajQ family.</text>
</comment>
<organism>
    <name type="scientific">Bacillus mycoides (strain KBAB4)</name>
    <name type="common">Bacillus weihenstephanensis</name>
    <dbReference type="NCBI Taxonomy" id="315730"/>
    <lineage>
        <taxon>Bacteria</taxon>
        <taxon>Bacillati</taxon>
        <taxon>Bacillota</taxon>
        <taxon>Bacilli</taxon>
        <taxon>Bacillales</taxon>
        <taxon>Bacillaceae</taxon>
        <taxon>Bacillus</taxon>
        <taxon>Bacillus cereus group</taxon>
    </lineage>
</organism>
<proteinExistence type="inferred from homology"/>
<protein>
    <recommendedName>
        <fullName evidence="1">Nucleotide-binding protein BcerKBAB4_1061</fullName>
    </recommendedName>
</protein>
<gene>
    <name type="ordered locus">BcerKBAB4_1061</name>
</gene>
<dbReference type="EMBL" id="CP000903">
    <property type="protein sequence ID" value="ABY42310.1"/>
    <property type="molecule type" value="Genomic_DNA"/>
</dbReference>
<dbReference type="RefSeq" id="WP_002140817.1">
    <property type="nucleotide sequence ID" value="NC_010184.1"/>
</dbReference>
<dbReference type="SMR" id="A9VJ21"/>
<dbReference type="KEGG" id="bwe:BcerKBAB4_1061"/>
<dbReference type="eggNOG" id="COG1666">
    <property type="taxonomic scope" value="Bacteria"/>
</dbReference>
<dbReference type="HOGENOM" id="CLU_099839_1_0_9"/>
<dbReference type="Proteomes" id="UP000002154">
    <property type="component" value="Chromosome"/>
</dbReference>
<dbReference type="GO" id="GO:0005829">
    <property type="term" value="C:cytosol"/>
    <property type="evidence" value="ECO:0007669"/>
    <property type="project" value="TreeGrafter"/>
</dbReference>
<dbReference type="GO" id="GO:0000166">
    <property type="term" value="F:nucleotide binding"/>
    <property type="evidence" value="ECO:0007669"/>
    <property type="project" value="TreeGrafter"/>
</dbReference>
<dbReference type="CDD" id="cd11740">
    <property type="entry name" value="YajQ_like"/>
    <property type="match status" value="1"/>
</dbReference>
<dbReference type="FunFam" id="3.30.70.990:FF:000002">
    <property type="entry name" value="UPF0234 protein LEP1GSC067_4943"/>
    <property type="match status" value="1"/>
</dbReference>
<dbReference type="FunFam" id="3.30.70.860:FF:000003">
    <property type="entry name" value="UPF0234 protein YBT020_06460"/>
    <property type="match status" value="1"/>
</dbReference>
<dbReference type="Gene3D" id="3.30.70.860">
    <property type="match status" value="1"/>
</dbReference>
<dbReference type="Gene3D" id="3.30.70.990">
    <property type="entry name" value="YajQ-like, domain 2"/>
    <property type="match status" value="1"/>
</dbReference>
<dbReference type="HAMAP" id="MF_00632">
    <property type="entry name" value="YajQ"/>
    <property type="match status" value="1"/>
</dbReference>
<dbReference type="InterPro" id="IPR007551">
    <property type="entry name" value="DUF520"/>
</dbReference>
<dbReference type="InterPro" id="IPR035571">
    <property type="entry name" value="UPF0234-like_C"/>
</dbReference>
<dbReference type="InterPro" id="IPR035570">
    <property type="entry name" value="UPF0234_N"/>
</dbReference>
<dbReference type="InterPro" id="IPR036183">
    <property type="entry name" value="YajQ-like_sf"/>
</dbReference>
<dbReference type="NCBIfam" id="NF003819">
    <property type="entry name" value="PRK05412.1"/>
    <property type="match status" value="1"/>
</dbReference>
<dbReference type="PANTHER" id="PTHR30476">
    <property type="entry name" value="UPF0234 PROTEIN YAJQ"/>
    <property type="match status" value="1"/>
</dbReference>
<dbReference type="PANTHER" id="PTHR30476:SF0">
    <property type="entry name" value="UPF0234 PROTEIN YAJQ"/>
    <property type="match status" value="1"/>
</dbReference>
<dbReference type="Pfam" id="PF04461">
    <property type="entry name" value="DUF520"/>
    <property type="match status" value="1"/>
</dbReference>
<dbReference type="SUPFAM" id="SSF89963">
    <property type="entry name" value="YajQ-like"/>
    <property type="match status" value="2"/>
</dbReference>
<feature type="chain" id="PRO_1000130602" description="Nucleotide-binding protein BcerKBAB4_1061">
    <location>
        <begin position="1"/>
        <end position="163"/>
    </location>
</feature>
<reference key="1">
    <citation type="journal article" date="2008" name="Chem. Biol. Interact.">
        <title>Extending the Bacillus cereus group genomics to putative food-borne pathogens of different toxicity.</title>
        <authorList>
            <person name="Lapidus A."/>
            <person name="Goltsman E."/>
            <person name="Auger S."/>
            <person name="Galleron N."/>
            <person name="Segurens B."/>
            <person name="Dossat C."/>
            <person name="Land M.L."/>
            <person name="Broussolle V."/>
            <person name="Brillard J."/>
            <person name="Guinebretiere M.-H."/>
            <person name="Sanchis V."/>
            <person name="Nguen-the C."/>
            <person name="Lereclus D."/>
            <person name="Richardson P."/>
            <person name="Wincker P."/>
            <person name="Weissenbach J."/>
            <person name="Ehrlich S.D."/>
            <person name="Sorokin A."/>
        </authorList>
    </citation>
    <scope>NUCLEOTIDE SEQUENCE [LARGE SCALE GENOMIC DNA]</scope>
    <source>
        <strain>KBAB4</strain>
    </source>
</reference>
<accession>A9VJ21</accession>
<evidence type="ECO:0000255" key="1">
    <source>
        <dbReference type="HAMAP-Rule" id="MF_00632"/>
    </source>
</evidence>